<reference key="1">
    <citation type="journal article" date="2003" name="Nature">
        <title>Genome divergence in two Prochlorococcus ecotypes reflects oceanic niche differentiation.</title>
        <authorList>
            <person name="Rocap G."/>
            <person name="Larimer F.W."/>
            <person name="Lamerdin J.E."/>
            <person name="Malfatti S."/>
            <person name="Chain P."/>
            <person name="Ahlgren N.A."/>
            <person name="Arellano A."/>
            <person name="Coleman M."/>
            <person name="Hauser L."/>
            <person name="Hess W.R."/>
            <person name="Johnson Z.I."/>
            <person name="Land M.L."/>
            <person name="Lindell D."/>
            <person name="Post A.F."/>
            <person name="Regala W."/>
            <person name="Shah M."/>
            <person name="Shaw S.L."/>
            <person name="Steglich C."/>
            <person name="Sullivan M.B."/>
            <person name="Ting C.S."/>
            <person name="Tolonen A."/>
            <person name="Webb E.A."/>
            <person name="Zinser E.R."/>
            <person name="Chisholm S.W."/>
        </authorList>
    </citation>
    <scope>NUCLEOTIDE SEQUENCE [LARGE SCALE GENOMIC DNA]</scope>
    <source>
        <strain>MIT 9313</strain>
    </source>
</reference>
<name>FABH_PROMM</name>
<keyword id="KW-0012">Acyltransferase</keyword>
<keyword id="KW-0963">Cytoplasm</keyword>
<keyword id="KW-0275">Fatty acid biosynthesis</keyword>
<keyword id="KW-0276">Fatty acid metabolism</keyword>
<keyword id="KW-0444">Lipid biosynthesis</keyword>
<keyword id="KW-0443">Lipid metabolism</keyword>
<keyword id="KW-0511">Multifunctional enzyme</keyword>
<keyword id="KW-1185">Reference proteome</keyword>
<keyword id="KW-0808">Transferase</keyword>
<comment type="function">
    <text evidence="1">Catalyzes the condensation reaction of fatty acid synthesis by the addition to an acyl acceptor of two carbons from malonyl-ACP. Catalyzes the first condensation reaction which initiates fatty acid synthesis and may therefore play a role in governing the total rate of fatty acid production. Possesses both acetoacetyl-ACP synthase and acetyl transacylase activities. Its substrate specificity determines the biosynthesis of branched-chain and/or straight-chain of fatty acids.</text>
</comment>
<comment type="catalytic activity">
    <reaction evidence="1">
        <text>malonyl-[ACP] + acetyl-CoA + H(+) = 3-oxobutanoyl-[ACP] + CO2 + CoA</text>
        <dbReference type="Rhea" id="RHEA:12080"/>
        <dbReference type="Rhea" id="RHEA-COMP:9623"/>
        <dbReference type="Rhea" id="RHEA-COMP:9625"/>
        <dbReference type="ChEBI" id="CHEBI:15378"/>
        <dbReference type="ChEBI" id="CHEBI:16526"/>
        <dbReference type="ChEBI" id="CHEBI:57287"/>
        <dbReference type="ChEBI" id="CHEBI:57288"/>
        <dbReference type="ChEBI" id="CHEBI:78449"/>
        <dbReference type="ChEBI" id="CHEBI:78450"/>
        <dbReference type="EC" id="2.3.1.180"/>
    </reaction>
</comment>
<comment type="pathway">
    <text evidence="1">Lipid metabolism; fatty acid biosynthesis.</text>
</comment>
<comment type="subunit">
    <text evidence="1">Homodimer.</text>
</comment>
<comment type="subcellular location">
    <subcellularLocation>
        <location evidence="1">Cytoplasm</location>
    </subcellularLocation>
</comment>
<comment type="domain">
    <text evidence="1">The last Arg residue of the ACP-binding site is essential for the weak association between ACP/AcpP and FabH.</text>
</comment>
<comment type="similarity">
    <text evidence="1">Belongs to the thiolase-like superfamily. FabH family.</text>
</comment>
<feature type="chain" id="PRO_0000110453" description="Beta-ketoacyl-[acyl-carrier-protein] synthase III">
    <location>
        <begin position="1"/>
        <end position="339"/>
    </location>
</feature>
<feature type="region of interest" description="ACP-binding" evidence="1">
    <location>
        <begin position="263"/>
        <end position="267"/>
    </location>
</feature>
<feature type="active site" evidence="1">
    <location>
        <position position="119"/>
    </location>
</feature>
<feature type="active site" evidence="1">
    <location>
        <position position="262"/>
    </location>
</feature>
<feature type="active site" evidence="1">
    <location>
        <position position="292"/>
    </location>
</feature>
<dbReference type="EC" id="2.3.1.180" evidence="1"/>
<dbReference type="EMBL" id="BX548175">
    <property type="protein sequence ID" value="CAE22170.1"/>
    <property type="molecule type" value="Genomic_DNA"/>
</dbReference>
<dbReference type="RefSeq" id="WP_011131361.1">
    <property type="nucleotide sequence ID" value="NC_005071.1"/>
</dbReference>
<dbReference type="SMR" id="Q7V4F6"/>
<dbReference type="KEGG" id="pmt:PMT_1996"/>
<dbReference type="eggNOG" id="COG0332">
    <property type="taxonomic scope" value="Bacteria"/>
</dbReference>
<dbReference type="HOGENOM" id="CLU_039592_0_1_3"/>
<dbReference type="UniPathway" id="UPA00094"/>
<dbReference type="Proteomes" id="UP000001423">
    <property type="component" value="Chromosome"/>
</dbReference>
<dbReference type="GO" id="GO:0005737">
    <property type="term" value="C:cytoplasm"/>
    <property type="evidence" value="ECO:0007669"/>
    <property type="project" value="UniProtKB-SubCell"/>
</dbReference>
<dbReference type="GO" id="GO:0004315">
    <property type="term" value="F:3-oxoacyl-[acyl-carrier-protein] synthase activity"/>
    <property type="evidence" value="ECO:0007669"/>
    <property type="project" value="InterPro"/>
</dbReference>
<dbReference type="GO" id="GO:0033818">
    <property type="term" value="F:beta-ketoacyl-acyl-carrier-protein synthase III activity"/>
    <property type="evidence" value="ECO:0007669"/>
    <property type="project" value="UniProtKB-UniRule"/>
</dbReference>
<dbReference type="GO" id="GO:0006633">
    <property type="term" value="P:fatty acid biosynthetic process"/>
    <property type="evidence" value="ECO:0007669"/>
    <property type="project" value="UniProtKB-UniRule"/>
</dbReference>
<dbReference type="CDD" id="cd00830">
    <property type="entry name" value="KAS_III"/>
    <property type="match status" value="1"/>
</dbReference>
<dbReference type="FunFam" id="3.40.47.10:FF:000004">
    <property type="entry name" value="3-oxoacyl-[acyl-carrier-protein] synthase 3"/>
    <property type="match status" value="1"/>
</dbReference>
<dbReference type="Gene3D" id="3.40.47.10">
    <property type="match status" value="1"/>
</dbReference>
<dbReference type="HAMAP" id="MF_01815">
    <property type="entry name" value="FabH"/>
    <property type="match status" value="1"/>
</dbReference>
<dbReference type="InterPro" id="IPR013747">
    <property type="entry name" value="ACP_syn_III_C"/>
</dbReference>
<dbReference type="InterPro" id="IPR013751">
    <property type="entry name" value="ACP_syn_III_N"/>
</dbReference>
<dbReference type="InterPro" id="IPR004655">
    <property type="entry name" value="FabH"/>
</dbReference>
<dbReference type="InterPro" id="IPR016039">
    <property type="entry name" value="Thiolase-like"/>
</dbReference>
<dbReference type="NCBIfam" id="TIGR00747">
    <property type="entry name" value="fabH"/>
    <property type="match status" value="1"/>
</dbReference>
<dbReference type="NCBIfam" id="NF006829">
    <property type="entry name" value="PRK09352.1"/>
    <property type="match status" value="1"/>
</dbReference>
<dbReference type="PANTHER" id="PTHR43091">
    <property type="entry name" value="3-OXOACYL-[ACYL-CARRIER-PROTEIN] SYNTHASE"/>
    <property type="match status" value="1"/>
</dbReference>
<dbReference type="PANTHER" id="PTHR43091:SF1">
    <property type="entry name" value="BETA-KETOACYL-[ACYL-CARRIER-PROTEIN] SYNTHASE III, CHLOROPLASTIC"/>
    <property type="match status" value="1"/>
</dbReference>
<dbReference type="Pfam" id="PF08545">
    <property type="entry name" value="ACP_syn_III"/>
    <property type="match status" value="1"/>
</dbReference>
<dbReference type="Pfam" id="PF08541">
    <property type="entry name" value="ACP_syn_III_C"/>
    <property type="match status" value="1"/>
</dbReference>
<dbReference type="SUPFAM" id="SSF53901">
    <property type="entry name" value="Thiolase-like"/>
    <property type="match status" value="1"/>
</dbReference>
<evidence type="ECO:0000255" key="1">
    <source>
        <dbReference type="HAMAP-Rule" id="MF_01815"/>
    </source>
</evidence>
<protein>
    <recommendedName>
        <fullName evidence="1">Beta-ketoacyl-[acyl-carrier-protein] synthase III</fullName>
        <shortName evidence="1">Beta-ketoacyl-ACP synthase III</shortName>
        <shortName evidence="1">KAS III</shortName>
        <ecNumber evidence="1">2.3.1.180</ecNumber>
    </recommendedName>
    <alternativeName>
        <fullName evidence="1">3-oxoacyl-[acyl-carrier-protein] synthase 3</fullName>
    </alternativeName>
    <alternativeName>
        <fullName evidence="1">3-oxoacyl-[acyl-carrier-protein] synthase III</fullName>
    </alternativeName>
</protein>
<organism>
    <name type="scientific">Prochlorococcus marinus (strain MIT 9313)</name>
    <dbReference type="NCBI Taxonomy" id="74547"/>
    <lineage>
        <taxon>Bacteria</taxon>
        <taxon>Bacillati</taxon>
        <taxon>Cyanobacteriota</taxon>
        <taxon>Cyanophyceae</taxon>
        <taxon>Synechococcales</taxon>
        <taxon>Prochlorococcaceae</taxon>
        <taxon>Prochlorococcus</taxon>
    </lineage>
</organism>
<gene>
    <name evidence="1" type="primary">fabH</name>
    <name type="ordered locus">PMT_1996</name>
</gene>
<accession>Q7V4F6</accession>
<proteinExistence type="inferred from homology"/>
<sequence length="339" mass="35755">MAETSTIGSGVALVGCGSATPSQRISNDQLGQRVDTSDAWIRSRTGISARRVIGPDETLTGLSHQAAANALTMAGWEPESVDLIILATSTPDDLFGSAPQLQAILGARQAVAFDLTAACSGFLFALITAAQFLRTGAMRRALVIGADQLSRWVDWDDRRSCVLFGDGAGAVALEATSAAQNGLLGFQLKSDGSRGDCLNLPQVQNHLSLVAGNSHQQGGFKPIQMNGQEVYKFAVREVPAILQTLLKATNTAPESLDWLLLHQANQRILDAVANRFAIPQAKVLSNLAEYGNTSAATIPLMLDEAVQDGRIKPGQLIASSGFGAGLSWGAALIRWHGPI</sequence>